<protein>
    <recommendedName>
        <fullName evidence="1">Uracil-DNA glycosylase</fullName>
        <shortName evidence="1">UDG</shortName>
        <ecNumber evidence="1">3.2.2.27</ecNumber>
    </recommendedName>
</protein>
<dbReference type="EC" id="3.2.2.27" evidence="1"/>
<dbReference type="EMBL" id="CP001205">
    <property type="protein sequence ID" value="ACK74828.1"/>
    <property type="molecule type" value="Genomic_DNA"/>
</dbReference>
<dbReference type="RefSeq" id="WP_002656594.1">
    <property type="nucleotide sequence ID" value="NC_011728.1"/>
</dbReference>
<dbReference type="SMR" id="B7J0Y9"/>
<dbReference type="GeneID" id="56568164"/>
<dbReference type="KEGG" id="bbz:BbuZS7_0054"/>
<dbReference type="HOGENOM" id="CLU_032162_3_0_12"/>
<dbReference type="Proteomes" id="UP000006901">
    <property type="component" value="Chromosome"/>
</dbReference>
<dbReference type="GO" id="GO:0005737">
    <property type="term" value="C:cytoplasm"/>
    <property type="evidence" value="ECO:0007669"/>
    <property type="project" value="UniProtKB-SubCell"/>
</dbReference>
<dbReference type="GO" id="GO:0004844">
    <property type="term" value="F:uracil DNA N-glycosylase activity"/>
    <property type="evidence" value="ECO:0007669"/>
    <property type="project" value="UniProtKB-UniRule"/>
</dbReference>
<dbReference type="GO" id="GO:0097510">
    <property type="term" value="P:base-excision repair, AP site formation via deaminated base removal"/>
    <property type="evidence" value="ECO:0007669"/>
    <property type="project" value="TreeGrafter"/>
</dbReference>
<dbReference type="CDD" id="cd10027">
    <property type="entry name" value="UDG-F1-like"/>
    <property type="match status" value="1"/>
</dbReference>
<dbReference type="FunFam" id="3.40.470.10:FF:000001">
    <property type="entry name" value="Uracil-DNA glycosylase"/>
    <property type="match status" value="1"/>
</dbReference>
<dbReference type="Gene3D" id="3.40.470.10">
    <property type="entry name" value="Uracil-DNA glycosylase-like domain"/>
    <property type="match status" value="1"/>
</dbReference>
<dbReference type="HAMAP" id="MF_00148">
    <property type="entry name" value="UDG"/>
    <property type="match status" value="1"/>
</dbReference>
<dbReference type="InterPro" id="IPR002043">
    <property type="entry name" value="UDG_fam1"/>
</dbReference>
<dbReference type="InterPro" id="IPR018085">
    <property type="entry name" value="Ura-DNA_Glyclase_AS"/>
</dbReference>
<dbReference type="InterPro" id="IPR005122">
    <property type="entry name" value="Uracil-DNA_glycosylase-like"/>
</dbReference>
<dbReference type="InterPro" id="IPR036895">
    <property type="entry name" value="Uracil-DNA_glycosylase-like_sf"/>
</dbReference>
<dbReference type="NCBIfam" id="NF003588">
    <property type="entry name" value="PRK05254.1-1"/>
    <property type="match status" value="1"/>
</dbReference>
<dbReference type="NCBIfam" id="NF003589">
    <property type="entry name" value="PRK05254.1-2"/>
    <property type="match status" value="1"/>
</dbReference>
<dbReference type="NCBIfam" id="NF003591">
    <property type="entry name" value="PRK05254.1-4"/>
    <property type="match status" value="1"/>
</dbReference>
<dbReference type="NCBIfam" id="NF003592">
    <property type="entry name" value="PRK05254.1-5"/>
    <property type="match status" value="1"/>
</dbReference>
<dbReference type="NCBIfam" id="TIGR00628">
    <property type="entry name" value="ung"/>
    <property type="match status" value="1"/>
</dbReference>
<dbReference type="PANTHER" id="PTHR11264">
    <property type="entry name" value="URACIL-DNA GLYCOSYLASE"/>
    <property type="match status" value="1"/>
</dbReference>
<dbReference type="PANTHER" id="PTHR11264:SF0">
    <property type="entry name" value="URACIL-DNA GLYCOSYLASE"/>
    <property type="match status" value="1"/>
</dbReference>
<dbReference type="Pfam" id="PF03167">
    <property type="entry name" value="UDG"/>
    <property type="match status" value="1"/>
</dbReference>
<dbReference type="SMART" id="SM00986">
    <property type="entry name" value="UDG"/>
    <property type="match status" value="1"/>
</dbReference>
<dbReference type="SMART" id="SM00987">
    <property type="entry name" value="UreE_C"/>
    <property type="match status" value="1"/>
</dbReference>
<dbReference type="SUPFAM" id="SSF52141">
    <property type="entry name" value="Uracil-DNA glycosylase-like"/>
    <property type="match status" value="1"/>
</dbReference>
<dbReference type="PROSITE" id="PS00130">
    <property type="entry name" value="U_DNA_GLYCOSYLASE"/>
    <property type="match status" value="1"/>
</dbReference>
<name>UNG_BORBZ</name>
<evidence type="ECO:0000255" key="1">
    <source>
        <dbReference type="HAMAP-Rule" id="MF_00148"/>
    </source>
</evidence>
<reference key="1">
    <citation type="journal article" date="2011" name="J. Bacteriol.">
        <title>Whole-genome sequences of thirteen isolates of Borrelia burgdorferi.</title>
        <authorList>
            <person name="Schutzer S.E."/>
            <person name="Fraser-Liggett C.M."/>
            <person name="Casjens S.R."/>
            <person name="Qiu W.G."/>
            <person name="Dunn J.J."/>
            <person name="Mongodin E.F."/>
            <person name="Luft B.J."/>
        </authorList>
    </citation>
    <scope>NUCLEOTIDE SEQUENCE [LARGE SCALE GENOMIC DNA]</scope>
    <source>
        <strain>ZS7</strain>
    </source>
</reference>
<keyword id="KW-0963">Cytoplasm</keyword>
<keyword id="KW-0227">DNA damage</keyword>
<keyword id="KW-0234">DNA repair</keyword>
<keyword id="KW-0378">Hydrolase</keyword>
<feature type="chain" id="PRO_1000199770" description="Uracil-DNA glycosylase">
    <location>
        <begin position="1"/>
        <end position="223"/>
    </location>
</feature>
<feature type="active site" description="Proton acceptor" evidence="1">
    <location>
        <position position="67"/>
    </location>
</feature>
<gene>
    <name evidence="1" type="primary">ung</name>
    <name type="ordered locus">BbuZS7_0054</name>
</gene>
<proteinExistence type="inferred from homology"/>
<organism>
    <name type="scientific">Borreliella burgdorferi (strain ZS7)</name>
    <name type="common">Borrelia burgdorferi</name>
    <dbReference type="NCBI Taxonomy" id="445985"/>
    <lineage>
        <taxon>Bacteria</taxon>
        <taxon>Pseudomonadati</taxon>
        <taxon>Spirochaetota</taxon>
        <taxon>Spirochaetia</taxon>
        <taxon>Spirochaetales</taxon>
        <taxon>Borreliaceae</taxon>
        <taxon>Borreliella</taxon>
    </lineage>
</organism>
<comment type="function">
    <text evidence="1">Excises uracil residues from the DNA which can arise as a result of misincorporation of dUMP residues by DNA polymerase or due to deamination of cytosine.</text>
</comment>
<comment type="catalytic activity">
    <reaction evidence="1">
        <text>Hydrolyzes single-stranded DNA or mismatched double-stranded DNA and polynucleotides, releasing free uracil.</text>
        <dbReference type="EC" id="3.2.2.27"/>
    </reaction>
</comment>
<comment type="subcellular location">
    <subcellularLocation>
        <location evidence="1">Cytoplasm</location>
    </subcellularLocation>
</comment>
<comment type="similarity">
    <text evidence="1">Belongs to the uracil-DNA glycosylase (UDG) superfamily. UNG family.</text>
</comment>
<sequence>MKVKIEESWKEVLNNEFNKEYFKKLVKFIKHEYKTKNGKIFPPPKLIFNAFNSLPFKDIKVVIIGQDPYHGKNQANGLAFSVDSKIKIPPSLQNIFKEIEKSLKIKTIPNGDLKRWAIQGVFLINTILTVEEGKPSSHKAIGWEIFTDEVIKIISKNLKNIVFMLWGNLARSKKGLIDPTKHLILETSHPSPYSANNGFLGSNHFSSALDYLKKHNKNIINFQ</sequence>
<accession>B7J0Y9</accession>